<name>Y695_METJA</name>
<comment type="similarity">
    <text evidence="2">To M.jannaschii MJ0803.</text>
</comment>
<sequence>MNLWEFRFGKSFLFIPNFIMKVLAFEELALFDIFDSLINVKINIYENGIECGFSFYKWDEFKGYKIEDKYIRLISKFPLIIRLIFVRDIYLRYDEELEGIIEKHLRQK</sequence>
<proteinExistence type="inferred from homology"/>
<protein>
    <recommendedName>
        <fullName>Uncharacterized protein MJ0695</fullName>
    </recommendedName>
</protein>
<keyword id="KW-1185">Reference proteome</keyword>
<keyword id="KW-0732">Signal</keyword>
<reference key="1">
    <citation type="journal article" date="1996" name="Science">
        <title>Complete genome sequence of the methanogenic archaeon, Methanococcus jannaschii.</title>
        <authorList>
            <person name="Bult C.J."/>
            <person name="White O."/>
            <person name="Olsen G.J."/>
            <person name="Zhou L."/>
            <person name="Fleischmann R.D."/>
            <person name="Sutton G.G."/>
            <person name="Blake J.A."/>
            <person name="FitzGerald L.M."/>
            <person name="Clayton R.A."/>
            <person name="Gocayne J.D."/>
            <person name="Kerlavage A.R."/>
            <person name="Dougherty B.A."/>
            <person name="Tomb J.-F."/>
            <person name="Adams M.D."/>
            <person name="Reich C.I."/>
            <person name="Overbeek R."/>
            <person name="Kirkness E.F."/>
            <person name="Weinstock K.G."/>
            <person name="Merrick J.M."/>
            <person name="Glodek A."/>
            <person name="Scott J.L."/>
            <person name="Geoghagen N.S.M."/>
            <person name="Weidman J.F."/>
            <person name="Fuhrmann J.L."/>
            <person name="Nguyen D."/>
            <person name="Utterback T.R."/>
            <person name="Kelley J.M."/>
            <person name="Peterson J.D."/>
            <person name="Sadow P.W."/>
            <person name="Hanna M.C."/>
            <person name="Cotton M.D."/>
            <person name="Roberts K.M."/>
            <person name="Hurst M.A."/>
            <person name="Kaine B.P."/>
            <person name="Borodovsky M."/>
            <person name="Klenk H.-P."/>
            <person name="Fraser C.M."/>
            <person name="Smith H.O."/>
            <person name="Woese C.R."/>
            <person name="Venter J.C."/>
        </authorList>
    </citation>
    <scope>NUCLEOTIDE SEQUENCE [LARGE SCALE GENOMIC DNA]</scope>
    <source>
        <strain>ATCC 43067 / DSM 2661 / JAL-1 / JCM 10045 / NBRC 100440</strain>
    </source>
</reference>
<feature type="signal peptide" evidence="1">
    <location>
        <begin position="1"/>
        <end position="24"/>
    </location>
</feature>
<feature type="chain" id="PRO_0000013993" description="Uncharacterized protein MJ0695">
    <location>
        <begin position="25"/>
        <end position="108"/>
    </location>
</feature>
<dbReference type="EMBL" id="L77117">
    <property type="protein sequence ID" value="AAB98696.1"/>
    <property type="molecule type" value="Genomic_DNA"/>
</dbReference>
<dbReference type="PIR" id="G64386">
    <property type="entry name" value="G64386"/>
</dbReference>
<dbReference type="RefSeq" id="WP_010870200.1">
    <property type="nucleotide sequence ID" value="NC_000909.1"/>
</dbReference>
<dbReference type="PaxDb" id="243232-MJ_0695"/>
<dbReference type="EnsemblBacteria" id="AAB98696">
    <property type="protein sequence ID" value="AAB98696"/>
    <property type="gene ID" value="MJ_0695"/>
</dbReference>
<dbReference type="GeneID" id="1451562"/>
<dbReference type="KEGG" id="mja:MJ_0695"/>
<dbReference type="eggNOG" id="arCOG10950">
    <property type="taxonomic scope" value="Archaea"/>
</dbReference>
<dbReference type="HOGENOM" id="CLU_145823_0_0_2"/>
<dbReference type="InParanoid" id="Q58106"/>
<dbReference type="OrthoDB" id="64963at2157"/>
<dbReference type="Proteomes" id="UP000000805">
    <property type="component" value="Chromosome"/>
</dbReference>
<accession>Q58106</accession>
<organism>
    <name type="scientific">Methanocaldococcus jannaschii (strain ATCC 43067 / DSM 2661 / JAL-1 / JCM 10045 / NBRC 100440)</name>
    <name type="common">Methanococcus jannaschii</name>
    <dbReference type="NCBI Taxonomy" id="243232"/>
    <lineage>
        <taxon>Archaea</taxon>
        <taxon>Methanobacteriati</taxon>
        <taxon>Methanobacteriota</taxon>
        <taxon>Methanomada group</taxon>
        <taxon>Methanococci</taxon>
        <taxon>Methanococcales</taxon>
        <taxon>Methanocaldococcaceae</taxon>
        <taxon>Methanocaldococcus</taxon>
    </lineage>
</organism>
<gene>
    <name type="ordered locus">MJ0695</name>
</gene>
<evidence type="ECO:0000255" key="1"/>
<evidence type="ECO:0000305" key="2"/>